<dbReference type="EC" id="3.1.5.-" evidence="2"/>
<dbReference type="EMBL" id="BC120271">
    <property type="protein sequence ID" value="AAI20272.1"/>
    <property type="molecule type" value="mRNA"/>
</dbReference>
<dbReference type="RefSeq" id="NP_001069329.1">
    <property type="nucleotide sequence ID" value="NM_001075861.2"/>
</dbReference>
<dbReference type="SMR" id="Q0VCA5"/>
<dbReference type="FunCoup" id="Q0VCA5">
    <property type="interactions" value="1883"/>
</dbReference>
<dbReference type="STRING" id="9913.ENSBTAP00000041236"/>
<dbReference type="PaxDb" id="9913-ENSBTAP00000041236"/>
<dbReference type="PeptideAtlas" id="Q0VCA5"/>
<dbReference type="Ensembl" id="ENSBTAT00000043682.3">
    <property type="protein sequence ID" value="ENSBTAP00000041236.3"/>
    <property type="gene ID" value="ENSBTAG00000022007.7"/>
</dbReference>
<dbReference type="GeneID" id="524683"/>
<dbReference type="KEGG" id="bta:524683"/>
<dbReference type="CTD" id="25939"/>
<dbReference type="VEuPathDB" id="HostDB:ENSBTAG00000022007"/>
<dbReference type="VGNC" id="VGNC:34277">
    <property type="gene designation" value="SAMHD1"/>
</dbReference>
<dbReference type="eggNOG" id="KOG2681">
    <property type="taxonomic scope" value="Eukaryota"/>
</dbReference>
<dbReference type="GeneTree" id="ENSGT00390000013867"/>
<dbReference type="HOGENOM" id="CLU_026821_1_2_1"/>
<dbReference type="InParanoid" id="Q0VCA5"/>
<dbReference type="OMA" id="QVHGYIK"/>
<dbReference type="OrthoDB" id="9991235at2759"/>
<dbReference type="Reactome" id="R-BTA-8956319">
    <property type="pathway name" value="Nucleotide catabolism"/>
</dbReference>
<dbReference type="Proteomes" id="UP000009136">
    <property type="component" value="Chromosome 13"/>
</dbReference>
<dbReference type="Bgee" id="ENSBTAG00000022007">
    <property type="expression patterns" value="Expressed in blood and 111 other cell types or tissues"/>
</dbReference>
<dbReference type="GO" id="GO:0005634">
    <property type="term" value="C:nucleus"/>
    <property type="evidence" value="ECO:0000250"/>
    <property type="project" value="UniProtKB"/>
</dbReference>
<dbReference type="GO" id="GO:0035861">
    <property type="term" value="C:site of double-strand break"/>
    <property type="evidence" value="ECO:0000250"/>
    <property type="project" value="UniProtKB"/>
</dbReference>
<dbReference type="GO" id="GO:0106375">
    <property type="term" value="F:deoxynucleoside triphosphate hydrolase activity"/>
    <property type="evidence" value="ECO:0000250"/>
    <property type="project" value="UniProtKB"/>
</dbReference>
<dbReference type="GO" id="GO:0032567">
    <property type="term" value="F:dGTP binding"/>
    <property type="evidence" value="ECO:0000250"/>
    <property type="project" value="UniProtKB"/>
</dbReference>
<dbReference type="GO" id="GO:0008832">
    <property type="term" value="F:dGTPase activity"/>
    <property type="evidence" value="ECO:0000250"/>
    <property type="project" value="UniProtKB"/>
</dbReference>
<dbReference type="GO" id="GO:0005525">
    <property type="term" value="F:GTP binding"/>
    <property type="evidence" value="ECO:0007669"/>
    <property type="project" value="UniProtKB-KW"/>
</dbReference>
<dbReference type="GO" id="GO:0003676">
    <property type="term" value="F:nucleic acid binding"/>
    <property type="evidence" value="ECO:0000250"/>
    <property type="project" value="UniProtKB"/>
</dbReference>
<dbReference type="GO" id="GO:0003723">
    <property type="term" value="F:RNA binding"/>
    <property type="evidence" value="ECO:0000250"/>
    <property type="project" value="UniProtKB"/>
</dbReference>
<dbReference type="GO" id="GO:0003697">
    <property type="term" value="F:single-stranded DNA binding"/>
    <property type="evidence" value="ECO:0000250"/>
    <property type="project" value="UniProtKB"/>
</dbReference>
<dbReference type="GO" id="GO:0016793">
    <property type="term" value="F:triphosphoric monoester hydrolase activity"/>
    <property type="evidence" value="ECO:0000250"/>
    <property type="project" value="UniProtKB"/>
</dbReference>
<dbReference type="GO" id="GO:0008270">
    <property type="term" value="F:zinc ion binding"/>
    <property type="evidence" value="ECO:0000250"/>
    <property type="project" value="UniProtKB"/>
</dbReference>
<dbReference type="GO" id="GO:0046061">
    <property type="term" value="P:dATP catabolic process"/>
    <property type="evidence" value="ECO:0000250"/>
    <property type="project" value="UniProtKB"/>
</dbReference>
<dbReference type="GO" id="GO:0051607">
    <property type="term" value="P:defense response to virus"/>
    <property type="evidence" value="ECO:0000250"/>
    <property type="project" value="UniProtKB"/>
</dbReference>
<dbReference type="GO" id="GO:0009264">
    <property type="term" value="P:deoxyribonucleotide catabolic process"/>
    <property type="evidence" value="ECO:0000250"/>
    <property type="project" value="UniProtKB"/>
</dbReference>
<dbReference type="GO" id="GO:0006203">
    <property type="term" value="P:dGTP catabolic process"/>
    <property type="evidence" value="ECO:0000250"/>
    <property type="project" value="UniProtKB"/>
</dbReference>
<dbReference type="GO" id="GO:0006974">
    <property type="term" value="P:DNA damage response"/>
    <property type="evidence" value="ECO:0000250"/>
    <property type="project" value="UniProtKB"/>
</dbReference>
<dbReference type="GO" id="GO:0110025">
    <property type="term" value="P:DNA strand resection involved in replication fork processing"/>
    <property type="evidence" value="ECO:0000250"/>
    <property type="project" value="UniProtKB"/>
</dbReference>
<dbReference type="GO" id="GO:0000724">
    <property type="term" value="P:double-strand break repair via homologous recombination"/>
    <property type="evidence" value="ECO:0000250"/>
    <property type="project" value="UniProtKB"/>
</dbReference>
<dbReference type="GO" id="GO:0045087">
    <property type="term" value="P:innate immune response"/>
    <property type="evidence" value="ECO:0007669"/>
    <property type="project" value="UniProtKB-KW"/>
</dbReference>
<dbReference type="GO" id="GO:0060339">
    <property type="term" value="P:negative regulation of type I interferon-mediated signaling pathway"/>
    <property type="evidence" value="ECO:0000250"/>
    <property type="project" value="UniProtKB"/>
</dbReference>
<dbReference type="GO" id="GO:0051289">
    <property type="term" value="P:protein homotetramerization"/>
    <property type="evidence" value="ECO:0000250"/>
    <property type="project" value="UniProtKB"/>
</dbReference>
<dbReference type="GO" id="GO:0045088">
    <property type="term" value="P:regulation of innate immune response"/>
    <property type="evidence" value="ECO:0000250"/>
    <property type="project" value="UniProtKB"/>
</dbReference>
<dbReference type="GO" id="GO:0016446">
    <property type="term" value="P:somatic hypermutation of immunoglobulin genes"/>
    <property type="evidence" value="ECO:0000250"/>
    <property type="project" value="UniProtKB"/>
</dbReference>
<dbReference type="CDD" id="cd00077">
    <property type="entry name" value="HDc"/>
    <property type="match status" value="1"/>
</dbReference>
<dbReference type="FunFam" id="1.10.3210.10:FF:000015">
    <property type="entry name" value="Deoxynucleoside triphosphate triphosphohydrolase SAMHD1"/>
    <property type="match status" value="1"/>
</dbReference>
<dbReference type="FunFam" id="1.10.150.50:FF:000067">
    <property type="entry name" value="SAM and HD domain-containing deoxynucleoside triphosphate triphosphohydrolase 1"/>
    <property type="match status" value="1"/>
</dbReference>
<dbReference type="FunFam" id="3.30.70.2760:FF:000002">
    <property type="entry name" value="SAM and HD domain-containing deoxynucleoside triphosphate triphosphohydrolase 1"/>
    <property type="match status" value="1"/>
</dbReference>
<dbReference type="Gene3D" id="3.30.70.2760">
    <property type="match status" value="1"/>
</dbReference>
<dbReference type="Gene3D" id="1.10.3210.10">
    <property type="entry name" value="Hypothetical protein af1432"/>
    <property type="match status" value="1"/>
</dbReference>
<dbReference type="Gene3D" id="1.10.150.50">
    <property type="entry name" value="Transcription Factor, Ets-1"/>
    <property type="match status" value="1"/>
</dbReference>
<dbReference type="InterPro" id="IPR050135">
    <property type="entry name" value="dGTPase-like"/>
</dbReference>
<dbReference type="InterPro" id="IPR003607">
    <property type="entry name" value="HD/PDEase_dom"/>
</dbReference>
<dbReference type="InterPro" id="IPR006674">
    <property type="entry name" value="HD_domain"/>
</dbReference>
<dbReference type="InterPro" id="IPR013761">
    <property type="entry name" value="SAM/pointed_sf"/>
</dbReference>
<dbReference type="PANTHER" id="PTHR11373">
    <property type="entry name" value="DEOXYNUCLEOSIDE TRIPHOSPHATE TRIPHOSPHOHYDROLASE"/>
    <property type="match status" value="1"/>
</dbReference>
<dbReference type="PANTHER" id="PTHR11373:SF4">
    <property type="entry name" value="DEOXYNUCLEOSIDE TRIPHOSPHATE TRIPHOSPHOHYDROLASE SAMHD1"/>
    <property type="match status" value="1"/>
</dbReference>
<dbReference type="Pfam" id="PF01966">
    <property type="entry name" value="HD"/>
    <property type="match status" value="1"/>
</dbReference>
<dbReference type="SMART" id="SM00471">
    <property type="entry name" value="HDc"/>
    <property type="match status" value="1"/>
</dbReference>
<dbReference type="SUPFAM" id="SSF109604">
    <property type="entry name" value="HD-domain/PDEase-like"/>
    <property type="match status" value="1"/>
</dbReference>
<dbReference type="SUPFAM" id="SSF47769">
    <property type="entry name" value="SAM/Pointed domain"/>
    <property type="match status" value="1"/>
</dbReference>
<dbReference type="PROSITE" id="PS51831">
    <property type="entry name" value="HD"/>
    <property type="match status" value="1"/>
</dbReference>
<reference key="1">
    <citation type="submission" date="2006-08" db="EMBL/GenBank/DDBJ databases">
        <authorList>
            <consortium name="NIH - Mammalian Gene Collection (MGC) project"/>
        </authorList>
    </citation>
    <scope>NUCLEOTIDE SEQUENCE [LARGE SCALE MRNA]</scope>
    <source>
        <strain>Hereford</strain>
        <tissue>Fetal medulla</tissue>
    </source>
</reference>
<protein>
    <recommendedName>
        <fullName evidence="6">Deoxynucleoside triphosphate triphosphohydrolase SAMHD1</fullName>
        <shortName evidence="6">dNTPase</shortName>
        <ecNumber evidence="2">3.1.5.-</ecNumber>
    </recommendedName>
</protein>
<organism>
    <name type="scientific">Bos taurus</name>
    <name type="common">Bovine</name>
    <dbReference type="NCBI Taxonomy" id="9913"/>
    <lineage>
        <taxon>Eukaryota</taxon>
        <taxon>Metazoa</taxon>
        <taxon>Chordata</taxon>
        <taxon>Craniata</taxon>
        <taxon>Vertebrata</taxon>
        <taxon>Euteleostomi</taxon>
        <taxon>Mammalia</taxon>
        <taxon>Eutheria</taxon>
        <taxon>Laurasiatheria</taxon>
        <taxon>Artiodactyla</taxon>
        <taxon>Ruminantia</taxon>
        <taxon>Pecora</taxon>
        <taxon>Bovidae</taxon>
        <taxon>Bovinae</taxon>
        <taxon>Bos</taxon>
    </lineage>
</organism>
<proteinExistence type="evidence at transcript level"/>
<comment type="function">
    <text evidence="1 2">Protein that acts both as a host restriction factor involved in defense response to virus and as a regulator of DNA end resection at stalled replication forks (By similarity). Has deoxynucleoside triphosphate (dNTPase) activity, which is required to restrict infection by viruses: dNTPase activity reduces cellular dNTP levels to levels too low for retroviral reverse transcription to occur, blocking early-stage virus replication in dendritic and other myeloid cells. Likewise, suppresses LINE-1 retrotransposon activity (By similarity). In addition to virus restriction, dNTPase activity acts as a regulator of DNA precursor pools by regulating dNTP pools. Functions during S phase at stalled DNA replication forks to promote the resection of gapped or reversed forks: acts by stimulating the exonuclease activity of MRE11, activating the ATR-CHK1 pathway and allowing the forks to restart replication. Its ability to promote degradation of nascent DNA at stalled replication forks is required to prevent induction of type I interferons, thereby preventing chronic inflammation. Ability to promote DNA end resection at stalled replication forks is independent of dNTPase activity (By similarity). Enhances immunoglobulin hypermutation in B-lymphocytes by promoting transversion mutation (By similarity).</text>
</comment>
<comment type="catalytic activity">
    <reaction evidence="2">
        <text>a 2'-deoxyribonucleoside 5'-triphosphate + H2O = a 2'-deoxyribonucleoside + triphosphate + H(+)</text>
        <dbReference type="Rhea" id="RHEA:46148"/>
        <dbReference type="ChEBI" id="CHEBI:15377"/>
        <dbReference type="ChEBI" id="CHEBI:15378"/>
        <dbReference type="ChEBI" id="CHEBI:18036"/>
        <dbReference type="ChEBI" id="CHEBI:18274"/>
        <dbReference type="ChEBI" id="CHEBI:61560"/>
    </reaction>
    <physiologicalReaction direction="left-to-right" evidence="2">
        <dbReference type="Rhea" id="RHEA:46149"/>
    </physiologicalReaction>
</comment>
<comment type="catalytic activity">
    <reaction evidence="2">
        <text>dATP + H2O = 2'-deoxyadenosine + triphosphate + H(+)</text>
        <dbReference type="Rhea" id="RHEA:67648"/>
        <dbReference type="ChEBI" id="CHEBI:15377"/>
        <dbReference type="ChEBI" id="CHEBI:15378"/>
        <dbReference type="ChEBI" id="CHEBI:17256"/>
        <dbReference type="ChEBI" id="CHEBI:18036"/>
        <dbReference type="ChEBI" id="CHEBI:61404"/>
    </reaction>
    <physiologicalReaction direction="left-to-right" evidence="2">
        <dbReference type="Rhea" id="RHEA:67649"/>
    </physiologicalReaction>
</comment>
<comment type="catalytic activity">
    <reaction evidence="2">
        <text>dCTP + H2O = 2'-deoxycytidine + triphosphate + H(+)</text>
        <dbReference type="Rhea" id="RHEA:80083"/>
        <dbReference type="ChEBI" id="CHEBI:15377"/>
        <dbReference type="ChEBI" id="CHEBI:15378"/>
        <dbReference type="ChEBI" id="CHEBI:15698"/>
        <dbReference type="ChEBI" id="CHEBI:18036"/>
        <dbReference type="ChEBI" id="CHEBI:61481"/>
    </reaction>
    <physiologicalReaction direction="left-to-right" evidence="2">
        <dbReference type="Rhea" id="RHEA:80084"/>
    </physiologicalReaction>
</comment>
<comment type="catalytic activity">
    <reaction evidence="2">
        <text>dGTP + H2O = 2'-deoxyguanosine + triphosphate + H(+)</text>
        <dbReference type="Rhea" id="RHEA:15193"/>
        <dbReference type="ChEBI" id="CHEBI:15377"/>
        <dbReference type="ChEBI" id="CHEBI:15378"/>
        <dbReference type="ChEBI" id="CHEBI:17172"/>
        <dbReference type="ChEBI" id="CHEBI:18036"/>
        <dbReference type="ChEBI" id="CHEBI:61429"/>
    </reaction>
    <physiologicalReaction direction="left-to-right" evidence="2">
        <dbReference type="Rhea" id="RHEA:15194"/>
    </physiologicalReaction>
</comment>
<comment type="catalytic activity">
    <reaction evidence="2">
        <text>dTTP + H2O = thymidine + triphosphate + H(+)</text>
        <dbReference type="Rhea" id="RHEA:80079"/>
        <dbReference type="ChEBI" id="CHEBI:15377"/>
        <dbReference type="ChEBI" id="CHEBI:15378"/>
        <dbReference type="ChEBI" id="CHEBI:17748"/>
        <dbReference type="ChEBI" id="CHEBI:18036"/>
        <dbReference type="ChEBI" id="CHEBI:37568"/>
    </reaction>
    <physiologicalReaction direction="left-to-right" evidence="2">
        <dbReference type="Rhea" id="RHEA:80080"/>
    </physiologicalReaction>
</comment>
<comment type="cofactor">
    <cofactor evidence="2">
        <name>Zn(2+)</name>
        <dbReference type="ChEBI" id="CHEBI:29105"/>
    </cofactor>
    <text evidence="2">Binds 1 zinc ion per subunit.</text>
</comment>
<comment type="activity regulation">
    <text evidence="2">Allosterically activated and regulated via the combined actions of GTP and dNTPs (dATP, dGTP, dTTP and dCTP): Allosteric site 1 binds GTP, while allosteric site 2 binds dNTP. Allosteric activation promotes the formation of highly active homotetramers.</text>
</comment>
<comment type="subunit">
    <text evidence="2">Homodimer; in absence of GTP and dNTP. Homotetramer; in GTP- and dNTP-bound form. Interacts with MRE11; leading to stimulate the exonuclease activity of MRE11. Interacts with RBBP8/CtIP. Interacts (via its C-terminus) with CD81.</text>
</comment>
<comment type="subcellular location">
    <subcellularLocation>
        <location evidence="2">Nucleus</location>
    </subcellularLocation>
    <subcellularLocation>
        <location evidence="2">Chromosome</location>
    </subcellularLocation>
    <text evidence="2">Localizes to sites of DNA double-strand breaks in response to DNA damage.</text>
</comment>
<comment type="similarity">
    <text evidence="6">Belongs to the SAMHD1 family.</text>
</comment>
<evidence type="ECO:0000250" key="1">
    <source>
        <dbReference type="UniProtKB" id="Q60710"/>
    </source>
</evidence>
<evidence type="ECO:0000250" key="2">
    <source>
        <dbReference type="UniProtKB" id="Q9Y3Z3"/>
    </source>
</evidence>
<evidence type="ECO:0000255" key="3">
    <source>
        <dbReference type="PROSITE-ProRule" id="PRU00184"/>
    </source>
</evidence>
<evidence type="ECO:0000255" key="4">
    <source>
        <dbReference type="PROSITE-ProRule" id="PRU01175"/>
    </source>
</evidence>
<evidence type="ECO:0000256" key="5">
    <source>
        <dbReference type="SAM" id="MobiDB-lite"/>
    </source>
</evidence>
<evidence type="ECO:0000305" key="6"/>
<name>SAMH1_BOVIN</name>
<gene>
    <name evidence="2" type="primary">SAMHD1</name>
</gene>
<keyword id="KW-0007">Acetylation</keyword>
<keyword id="KW-0021">Allosteric enzyme</keyword>
<keyword id="KW-0051">Antiviral defense</keyword>
<keyword id="KW-0158">Chromosome</keyword>
<keyword id="KW-0227">DNA damage</keyword>
<keyword id="KW-0234">DNA repair</keyword>
<keyword id="KW-0235">DNA replication</keyword>
<keyword id="KW-0342">GTP-binding</keyword>
<keyword id="KW-0378">Hydrolase</keyword>
<keyword id="KW-0391">Immunity</keyword>
<keyword id="KW-0399">Innate immunity</keyword>
<keyword id="KW-1017">Isopeptide bond</keyword>
<keyword id="KW-0464">Manganese</keyword>
<keyword id="KW-0479">Metal-binding</keyword>
<keyword id="KW-0547">Nucleotide-binding</keyword>
<keyword id="KW-0539">Nucleus</keyword>
<keyword id="KW-0597">Phosphoprotein</keyword>
<keyword id="KW-1185">Reference proteome</keyword>
<keyword id="KW-0832">Ubl conjugation</keyword>
<keyword id="KW-0862">Zinc</keyword>
<sequence length="589" mass="68239">MQSADSQNTPKRPRRDGSPRTPPDSPLADAETSPSHDLDPDYRTWGPEQVWSFLRRCGFSDSELLKRCREKRMSGSLLPFPEDLGISSHGKKMKLLNCIQDTMKVINDPIHGHIEFHPLLMRIIDTPQFQRLRYIKQLGGGYYVFPGASHNRFEHSLGVGYLAGRLVRELSEKQPELQISERDILCVQIAGLCHDLGHGPFSHMFDGRFIPLARPEIKWTHEQGSVMMFEHLINSNGLQDVMKYYGLIPEEDILFIKEQITGPPESPIKDASKWLYKGRPKEKSFLYEIVANKRNGIDVDKWDYFARDCHHLGIQNSFDYKRFLKFARVCEVDNMKHICTREKEVGNLYDMFHTRNCLHRRAYQHKVGNIIDTMITDAFLKADDHIEITGSAGRKYHISTAIDDMEAFTKLTDNIFLEILYSTDPNLNDARMILKKIESRNLYKFVGETQPMIQRIKKENYEHLPNEVASAKPSDVELEAELKAEDLIVDVINMDYGMEDKNPIDHVRFYCKSDLSKAVMITRNQVSQFLPETFAEQLIRVYCKKTDEKTLFAARQHFVHWCLINDFTKPQIKKLPLRKLKKELTTATG</sequence>
<feature type="chain" id="PRO_0000361968" description="Deoxynucleoside triphosphate triphosphohydrolase SAMHD1">
    <location>
        <begin position="1"/>
        <end position="589"/>
    </location>
</feature>
<feature type="domain" description="SAM" evidence="3">
    <location>
        <begin position="45"/>
        <end position="100"/>
    </location>
</feature>
<feature type="domain" description="HD" evidence="4">
    <location>
        <begin position="152"/>
        <end position="277"/>
    </location>
</feature>
<feature type="region of interest" description="Disordered" evidence="5">
    <location>
        <begin position="1"/>
        <end position="41"/>
    </location>
</feature>
<feature type="compositionally biased region" description="Polar residues" evidence="5">
    <location>
        <begin position="1"/>
        <end position="10"/>
    </location>
</feature>
<feature type="active site" evidence="2">
    <location>
        <position position="221"/>
    </location>
</feature>
<feature type="binding site" description="in chain B" evidence="2">
    <location>
        <position position="104"/>
    </location>
    <ligand>
        <name>GTP</name>
        <dbReference type="ChEBI" id="CHEBI:37565"/>
        <note>allosteric activator; ligand shared between 3 neighboring subunits of the tetramer</note>
    </ligand>
</feature>
<feature type="binding site" description="in chain B" evidence="2">
    <location>
        <position position="105"/>
    </location>
    <ligand>
        <name>GTP</name>
        <dbReference type="ChEBI" id="CHEBI:37565"/>
        <note>allosteric activator; ligand shared between 3 neighboring subunits of the tetramer</note>
    </ligand>
</feature>
<feature type="binding site" description="in chain B" evidence="2">
    <location>
        <position position="107"/>
    </location>
    <ligand>
        <name>dGTP</name>
        <dbReference type="ChEBI" id="CHEBI:61429"/>
        <label>2</label>
        <note>allosteric activator; ligand shared between 3 neighboring subunits of the tetramer</note>
    </ligand>
</feature>
<feature type="binding site" description="in chain B" evidence="2">
    <location>
        <position position="125"/>
    </location>
    <ligand>
        <name>GTP</name>
        <dbReference type="ChEBI" id="CHEBI:37565"/>
        <note>allosteric activator; ligand shared between 3 neighboring subunits of the tetramer</note>
    </ligand>
</feature>
<feature type="binding site" description="in chain B" evidence="2">
    <location>
        <position position="130"/>
    </location>
    <ligand>
        <name>GTP</name>
        <dbReference type="ChEBI" id="CHEBI:37565"/>
        <note>allosteric activator; ligand shared between 3 neighboring subunits of the tetramer</note>
    </ligand>
</feature>
<feature type="binding site" description="in chain B" evidence="2">
    <location>
        <position position="133"/>
    </location>
    <ligand>
        <name>GTP</name>
        <dbReference type="ChEBI" id="CHEBI:37565"/>
        <note>allosteric activator; ligand shared between 3 neighboring subunits of the tetramer</note>
    </ligand>
</feature>
<feature type="binding site" evidence="2">
    <location>
        <position position="137"/>
    </location>
    <ligand>
        <name>dATP</name>
        <dbReference type="ChEBI" id="CHEBI:61404"/>
        <label>1</label>
        <note>substrate</note>
    </ligand>
</feature>
<feature type="binding site" evidence="2">
    <location>
        <position position="137"/>
    </location>
    <ligand>
        <name>dCTP</name>
        <dbReference type="ChEBI" id="CHEBI:61481"/>
        <label>1</label>
        <note>substrate</note>
    </ligand>
</feature>
<feature type="binding site" evidence="2">
    <location>
        <position position="137"/>
    </location>
    <ligand>
        <name>dGTP</name>
        <dbReference type="ChEBI" id="CHEBI:61429"/>
        <label>1</label>
        <note>substrate</note>
    </ligand>
</feature>
<feature type="binding site" evidence="2">
    <location>
        <position position="137"/>
    </location>
    <ligand>
        <name>dTTP</name>
        <dbReference type="ChEBI" id="CHEBI:37568"/>
        <label>1</label>
        <note>substrate</note>
    </ligand>
</feature>
<feature type="binding site" evidence="2">
    <location>
        <position position="138"/>
    </location>
    <ligand>
        <name>dGTP</name>
        <dbReference type="ChEBI" id="CHEBI:61429"/>
        <label>1</label>
        <note>substrate</note>
    </ligand>
</feature>
<feature type="binding site" description="in chain C" evidence="2">
    <location>
        <position position="144"/>
    </location>
    <ligand>
        <name>dGTP</name>
        <dbReference type="ChEBI" id="CHEBI:61429"/>
        <label>2</label>
        <note>allosteric activator; ligand shared between 3 neighboring subunits of the tetramer</note>
    </ligand>
</feature>
<feature type="binding site" evidence="2">
    <location>
        <position position="152"/>
    </location>
    <ligand>
        <name>dATP</name>
        <dbReference type="ChEBI" id="CHEBI:61404"/>
        <label>1</label>
        <note>substrate</note>
    </ligand>
</feature>
<feature type="binding site" evidence="2">
    <location>
        <position position="152"/>
    </location>
    <ligand>
        <name>dCTP</name>
        <dbReference type="ChEBI" id="CHEBI:61481"/>
        <label>1</label>
        <note>substrate</note>
    </ligand>
</feature>
<feature type="binding site" evidence="2">
    <location>
        <position position="152"/>
    </location>
    <ligand>
        <name>dGTP</name>
        <dbReference type="ChEBI" id="CHEBI:61429"/>
        <label>1</label>
        <note>substrate</note>
    </ligand>
</feature>
<feature type="binding site" evidence="2">
    <location>
        <position position="152"/>
    </location>
    <ligand>
        <name>dTTP</name>
        <dbReference type="ChEBI" id="CHEBI:37568"/>
        <label>1</label>
        <note>substrate</note>
    </ligand>
</feature>
<feature type="binding site" evidence="2">
    <location>
        <position position="155"/>
    </location>
    <ligand>
        <name>Mn(2+)</name>
        <dbReference type="ChEBI" id="CHEBI:29035"/>
    </ligand>
</feature>
<feature type="binding site" evidence="2">
    <location>
        <position position="194"/>
    </location>
    <ligand>
        <name>Mn(2+)</name>
        <dbReference type="ChEBI" id="CHEBI:29035"/>
    </ligand>
</feature>
<feature type="binding site" evidence="2">
    <location>
        <position position="195"/>
    </location>
    <ligand>
        <name>Mn(2+)</name>
        <dbReference type="ChEBI" id="CHEBI:29035"/>
    </ligand>
</feature>
<feature type="binding site" evidence="2">
    <location>
        <position position="198"/>
    </location>
    <ligand>
        <name>dATP</name>
        <dbReference type="ChEBI" id="CHEBI:61404"/>
        <label>1</label>
        <note>substrate</note>
    </ligand>
</feature>
<feature type="binding site" evidence="2">
    <location>
        <position position="198"/>
    </location>
    <ligand>
        <name>dCTP</name>
        <dbReference type="ChEBI" id="CHEBI:61481"/>
        <label>1</label>
        <note>substrate</note>
    </ligand>
</feature>
<feature type="binding site" evidence="2">
    <location>
        <position position="198"/>
    </location>
    <ligand>
        <name>dTTP</name>
        <dbReference type="ChEBI" id="CHEBI:37568"/>
        <label>1</label>
        <note>substrate</note>
    </ligand>
</feature>
<feature type="binding site" evidence="2">
    <location>
        <position position="203"/>
    </location>
    <ligand>
        <name>dATP</name>
        <dbReference type="ChEBI" id="CHEBI:61404"/>
        <label>1</label>
        <note>substrate</note>
    </ligand>
</feature>
<feature type="binding site" evidence="2">
    <location>
        <position position="203"/>
    </location>
    <ligand>
        <name>dCTP</name>
        <dbReference type="ChEBI" id="CHEBI:61481"/>
        <label>1</label>
        <note>substrate</note>
    </ligand>
</feature>
<feature type="binding site" evidence="2">
    <location>
        <position position="203"/>
    </location>
    <ligand>
        <name>dTTP</name>
        <dbReference type="ChEBI" id="CHEBI:37568"/>
        <label>1</label>
        <note>substrate</note>
    </ligand>
</feature>
<feature type="binding site" evidence="2">
    <location>
        <position position="300"/>
    </location>
    <ligand>
        <name>Mn(2+)</name>
        <dbReference type="ChEBI" id="CHEBI:29035"/>
    </ligand>
</feature>
<feature type="binding site" evidence="2">
    <location>
        <position position="301"/>
    </location>
    <ligand>
        <name>dATP</name>
        <dbReference type="ChEBI" id="CHEBI:61404"/>
        <label>1</label>
        <note>substrate</note>
    </ligand>
</feature>
<feature type="binding site" evidence="2">
    <location>
        <position position="301"/>
    </location>
    <ligand>
        <name>dCTP</name>
        <dbReference type="ChEBI" id="CHEBI:61481"/>
        <label>1</label>
        <note>substrate</note>
    </ligand>
</feature>
<feature type="binding site" evidence="2">
    <location>
        <position position="301"/>
    </location>
    <ligand>
        <name>dGTP</name>
        <dbReference type="ChEBI" id="CHEBI:61429"/>
        <label>1</label>
        <note>substrate</note>
    </ligand>
</feature>
<feature type="binding site" evidence="2">
    <location>
        <position position="301"/>
    </location>
    <ligand>
        <name>dTTP</name>
        <dbReference type="ChEBI" id="CHEBI:37568"/>
        <label>1</label>
        <note>substrate</note>
    </ligand>
</feature>
<feature type="binding site" evidence="2">
    <location>
        <position position="304"/>
    </location>
    <ligand>
        <name>dATP</name>
        <dbReference type="ChEBI" id="CHEBI:61404"/>
        <label>1</label>
        <note>substrate</note>
    </ligand>
</feature>
<feature type="binding site" evidence="2">
    <location>
        <position position="304"/>
    </location>
    <ligand>
        <name>dCTP</name>
        <dbReference type="ChEBI" id="CHEBI:61481"/>
        <label>1</label>
        <note>substrate</note>
    </ligand>
</feature>
<feature type="binding site" evidence="2">
    <location>
        <position position="304"/>
    </location>
    <ligand>
        <name>dGTP</name>
        <dbReference type="ChEBI" id="CHEBI:61429"/>
        <label>1</label>
        <note>substrate</note>
    </ligand>
</feature>
<feature type="binding site" evidence="2">
    <location>
        <position position="304"/>
    </location>
    <ligand>
        <name>dTTP</name>
        <dbReference type="ChEBI" id="CHEBI:37568"/>
        <label>1</label>
        <note>substrate</note>
    </ligand>
</feature>
<feature type="binding site" evidence="2">
    <location>
        <position position="308"/>
    </location>
    <ligand>
        <name>dATP</name>
        <dbReference type="ChEBI" id="CHEBI:61404"/>
        <label>1</label>
        <note>substrate</note>
    </ligand>
</feature>
<feature type="binding site" evidence="2">
    <location>
        <position position="308"/>
    </location>
    <ligand>
        <name>dCTP</name>
        <dbReference type="ChEBI" id="CHEBI:61481"/>
        <label>1</label>
        <note>substrate</note>
    </ligand>
</feature>
<feature type="binding site" evidence="2">
    <location>
        <position position="308"/>
    </location>
    <ligand>
        <name>dGTP</name>
        <dbReference type="ChEBI" id="CHEBI:61429"/>
        <label>1</label>
        <note>substrate</note>
    </ligand>
</feature>
<feature type="binding site" evidence="2">
    <location>
        <position position="308"/>
    </location>
    <ligand>
        <name>dTTP</name>
        <dbReference type="ChEBI" id="CHEBI:37568"/>
        <label>1</label>
        <note>substrate</note>
    </ligand>
</feature>
<feature type="binding site" description="in chain A" evidence="2">
    <location>
        <position position="322"/>
    </location>
    <ligand>
        <name>dGTP</name>
        <dbReference type="ChEBI" id="CHEBI:61429"/>
        <label>2</label>
        <note>allosteric activator; ligand shared between 3 neighboring subunits of the tetramer</note>
    </ligand>
</feature>
<feature type="binding site" description="in chain A" evidence="2">
    <location>
        <position position="341"/>
    </location>
    <ligand>
        <name>dGTP</name>
        <dbReference type="ChEBI" id="CHEBI:61429"/>
        <label>2</label>
        <note>allosteric activator; ligand shared between 3 neighboring subunits of the tetramer</note>
    </ligand>
</feature>
<feature type="binding site" description="in chain A" evidence="2">
    <location>
        <position position="343"/>
    </location>
    <ligand>
        <name>dGTP</name>
        <dbReference type="ChEBI" id="CHEBI:61429"/>
        <label>2</label>
        <note>allosteric activator; ligand shared between 3 neighboring subunits of the tetramer</note>
    </ligand>
</feature>
<feature type="binding site" description="in chain A" evidence="2">
    <location>
        <position position="347"/>
    </location>
    <ligand>
        <name>dGTP</name>
        <dbReference type="ChEBI" id="CHEBI:61429"/>
        <label>2</label>
        <note>allosteric activator; ligand shared between 3 neighboring subunits of the tetramer</note>
    </ligand>
</feature>
<feature type="binding site" evidence="2">
    <location>
        <position position="355"/>
    </location>
    <ligand>
        <name>dATP</name>
        <dbReference type="ChEBI" id="CHEBI:61404"/>
        <label>1</label>
        <note>substrate</note>
    </ligand>
</feature>
<feature type="binding site" evidence="2">
    <location>
        <position position="355"/>
    </location>
    <ligand>
        <name>dCTP</name>
        <dbReference type="ChEBI" id="CHEBI:61481"/>
        <label>1</label>
        <note>substrate</note>
    </ligand>
</feature>
<feature type="binding site" evidence="2">
    <location>
        <position position="355"/>
    </location>
    <ligand>
        <name>dGTP</name>
        <dbReference type="ChEBI" id="CHEBI:61429"/>
        <label>1</label>
        <note>substrate</note>
    </ligand>
</feature>
<feature type="binding site" evidence="2">
    <location>
        <position position="363"/>
    </location>
    <ligand>
        <name>dGTP</name>
        <dbReference type="ChEBI" id="CHEBI:61429"/>
        <label>1</label>
        <note>substrate</note>
    </ligand>
</feature>
<feature type="binding site" evidence="2">
    <location>
        <position position="364"/>
    </location>
    <ligand>
        <name>dATP</name>
        <dbReference type="ChEBI" id="CHEBI:61404"/>
        <label>1</label>
        <note>substrate</note>
    </ligand>
</feature>
<feature type="binding site" evidence="2">
    <location>
        <position position="364"/>
    </location>
    <ligand>
        <name>dCTP</name>
        <dbReference type="ChEBI" id="CHEBI:61481"/>
        <label>1</label>
        <note>substrate</note>
    </ligand>
</feature>
<feature type="binding site" evidence="2">
    <location>
        <position position="364"/>
    </location>
    <ligand>
        <name>dGTP</name>
        <dbReference type="ChEBI" id="CHEBI:61429"/>
        <label>1</label>
        <note>substrate</note>
    </ligand>
</feature>
<feature type="binding site" evidence="2">
    <location>
        <position position="364"/>
    </location>
    <ligand>
        <name>dTTP</name>
        <dbReference type="ChEBI" id="CHEBI:37568"/>
        <label>1</label>
        <note>substrate</note>
    </ligand>
</feature>
<feature type="binding site" description="in chain C" evidence="2">
    <location>
        <position position="365"/>
    </location>
    <ligand>
        <name>dGTP</name>
        <dbReference type="ChEBI" id="CHEBI:61429"/>
        <label>2</label>
        <note>allosteric activator; ligand shared between 3 neighboring subunits of the tetramer</note>
    </ligand>
</feature>
<feature type="binding site" description="in chain C" evidence="2">
    <location>
        <position position="366"/>
    </location>
    <ligand>
        <name>dGTP</name>
        <dbReference type="ChEBI" id="CHEBI:61429"/>
        <label>2</label>
        <note>allosteric activator; ligand shared between 3 neighboring subunits of the tetramer</note>
    </ligand>
</feature>
<feature type="binding site" description="in chain C" evidence="2">
    <location>
        <position position="440"/>
    </location>
    <ligand>
        <name>GTP</name>
        <dbReference type="ChEBI" id="CHEBI:37565"/>
        <note>allosteric activator; ligand shared between 3 neighboring subunits of the tetramer</note>
    </ligand>
</feature>
<feature type="binding site" description="in chain C" evidence="2">
    <location>
        <position position="444"/>
    </location>
    <ligand>
        <name>GTP</name>
        <dbReference type="ChEBI" id="CHEBI:37565"/>
        <note>allosteric activator; ligand shared between 3 neighboring subunits of the tetramer</note>
    </ligand>
</feature>
<feature type="binding site" description="in chain A" evidence="2">
    <location>
        <position position="512"/>
    </location>
    <ligand>
        <name>dGTP</name>
        <dbReference type="ChEBI" id="CHEBI:61429"/>
        <label>2</label>
        <note>allosteric activator; ligand shared between 3 neighboring subunits of the tetramer</note>
    </ligand>
</feature>
<feature type="binding site" description="in chain A" evidence="2">
    <location>
        <position position="512"/>
    </location>
    <ligand>
        <name>GTP</name>
        <dbReference type="ChEBI" id="CHEBI:37565"/>
        <note>allosteric activator; ligand shared between 3 neighboring subunits of the tetramer</note>
    </ligand>
</feature>
<feature type="modified residue" description="N-acetylmethionine" evidence="2">
    <location>
        <position position="1"/>
    </location>
</feature>
<feature type="modified residue" description="Phosphoserine" evidence="1">
    <location>
        <position position="18"/>
    </location>
</feature>
<feature type="modified residue" description="Phosphothreonine" evidence="1">
    <location>
        <position position="21"/>
    </location>
</feature>
<feature type="modified residue" description="Phosphoserine" evidence="2">
    <location>
        <position position="33"/>
    </location>
</feature>
<feature type="modified residue" description="Phosphoserine" evidence="2">
    <location>
        <position position="88"/>
    </location>
</feature>
<feature type="cross-link" description="Glycyl lysine isopeptide (Lys-Gly) (interchain with G-Cter in SUMO2)" evidence="2">
    <location>
        <position position="457"/>
    </location>
</feature>
<accession>Q0VCA5</accession>